<sequence>MTKLRSSLYFWVLVAIALGVILGIVAPSTGAAMKPLGDGFIKLIKMVIAPIIFCTVVLGIAGTGDLKKVGRTGGLALLYFEVVSTVSLILGLLIVNIVRPGAGMNIDVRTLDAAAVSAYAGKGKMQSTSEFLINVIPNTFVDAFARGEILQVLLLAVLFGIALQRLGAHRNEVFQFIEKFSEIMFELVRMIMKVAPIGAFGAMAFTIGAYGIGSLFSLAKLMATFYLTCLCFIFLVLGAIARYHGFSIWRFLRYIREELLIVLGTSSSEAALPRMMAKMESLGAGRSTVGLVIPAGYSFNLDGTSIYLTMAAVFVAQATNSAMTLGEQFTLLAVLLLMSKGAAGVTGSGFIVLAATLSAIGKVPVGGLALILGIDRFMSEARALTNVIGNGVASIVVAKWTGDLDETMLTTRLKSGPPTPAEEPAIMS</sequence>
<keyword id="KW-0997">Cell inner membrane</keyword>
<keyword id="KW-1003">Cell membrane</keyword>
<keyword id="KW-0472">Membrane</keyword>
<keyword id="KW-0769">Symport</keyword>
<keyword id="KW-0812">Transmembrane</keyword>
<keyword id="KW-1133">Transmembrane helix</keyword>
<keyword id="KW-0813">Transport</keyword>
<reference key="1">
    <citation type="journal article" date="2009" name="Appl. Environ. Microbiol.">
        <title>Three genomes from the phylum Acidobacteria provide insight into the lifestyles of these microorganisms in soils.</title>
        <authorList>
            <person name="Ward N.L."/>
            <person name="Challacombe J.F."/>
            <person name="Janssen P.H."/>
            <person name="Henrissat B."/>
            <person name="Coutinho P.M."/>
            <person name="Wu M."/>
            <person name="Xie G."/>
            <person name="Haft D.H."/>
            <person name="Sait M."/>
            <person name="Badger J."/>
            <person name="Barabote R.D."/>
            <person name="Bradley B."/>
            <person name="Brettin T.S."/>
            <person name="Brinkac L.M."/>
            <person name="Bruce D."/>
            <person name="Creasy T."/>
            <person name="Daugherty S.C."/>
            <person name="Davidsen T.M."/>
            <person name="DeBoy R.T."/>
            <person name="Detter J.C."/>
            <person name="Dodson R.J."/>
            <person name="Durkin A.S."/>
            <person name="Ganapathy A."/>
            <person name="Gwinn-Giglio M."/>
            <person name="Han C.S."/>
            <person name="Khouri H."/>
            <person name="Kiss H."/>
            <person name="Kothari S.P."/>
            <person name="Madupu R."/>
            <person name="Nelson K.E."/>
            <person name="Nelson W.C."/>
            <person name="Paulsen I."/>
            <person name="Penn K."/>
            <person name="Ren Q."/>
            <person name="Rosovitz M.J."/>
            <person name="Selengut J.D."/>
            <person name="Shrivastava S."/>
            <person name="Sullivan S.A."/>
            <person name="Tapia R."/>
            <person name="Thompson L.S."/>
            <person name="Watkins K.L."/>
            <person name="Yang Q."/>
            <person name="Yu C."/>
            <person name="Zafar N."/>
            <person name="Zhou L."/>
            <person name="Kuske C.R."/>
        </authorList>
    </citation>
    <scope>NUCLEOTIDE SEQUENCE [LARGE SCALE GENOMIC DNA]</scope>
    <source>
        <strain>Ellin6076</strain>
    </source>
</reference>
<protein>
    <recommendedName>
        <fullName evidence="1">C4-dicarboxylate transport protein</fullName>
    </recommendedName>
</protein>
<organism>
    <name type="scientific">Solibacter usitatus (strain Ellin6076)</name>
    <dbReference type="NCBI Taxonomy" id="234267"/>
    <lineage>
        <taxon>Bacteria</taxon>
        <taxon>Pseudomonadati</taxon>
        <taxon>Acidobacteriota</taxon>
        <taxon>Terriglobia</taxon>
        <taxon>Bryobacterales</taxon>
        <taxon>Solibacteraceae</taxon>
        <taxon>Candidatus Solibacter</taxon>
    </lineage>
</organism>
<proteinExistence type="inferred from homology"/>
<accession>Q020J1</accession>
<evidence type="ECO:0000255" key="1">
    <source>
        <dbReference type="HAMAP-Rule" id="MF_01300"/>
    </source>
</evidence>
<dbReference type="EMBL" id="CP000473">
    <property type="protein sequence ID" value="ABJ84662.1"/>
    <property type="molecule type" value="Genomic_DNA"/>
</dbReference>
<dbReference type="SMR" id="Q020J1"/>
<dbReference type="FunCoup" id="Q020J1">
    <property type="interactions" value="324"/>
</dbReference>
<dbReference type="STRING" id="234267.Acid_3691"/>
<dbReference type="KEGG" id="sus:Acid_3691"/>
<dbReference type="eggNOG" id="COG1301">
    <property type="taxonomic scope" value="Bacteria"/>
</dbReference>
<dbReference type="HOGENOM" id="CLU_019375_7_0_0"/>
<dbReference type="InParanoid" id="Q020J1"/>
<dbReference type="OrthoDB" id="9768885at2"/>
<dbReference type="GO" id="GO:0005886">
    <property type="term" value="C:plasma membrane"/>
    <property type="evidence" value="ECO:0007669"/>
    <property type="project" value="UniProtKB-SubCell"/>
</dbReference>
<dbReference type="GO" id="GO:0015138">
    <property type="term" value="F:fumarate transmembrane transporter activity"/>
    <property type="evidence" value="ECO:0007669"/>
    <property type="project" value="TreeGrafter"/>
</dbReference>
<dbReference type="GO" id="GO:0015366">
    <property type="term" value="F:malate:proton symporter activity"/>
    <property type="evidence" value="ECO:0007669"/>
    <property type="project" value="TreeGrafter"/>
</dbReference>
<dbReference type="GO" id="GO:0015141">
    <property type="term" value="F:succinate transmembrane transporter activity"/>
    <property type="evidence" value="ECO:0007669"/>
    <property type="project" value="TreeGrafter"/>
</dbReference>
<dbReference type="GO" id="GO:0070778">
    <property type="term" value="P:L-aspartate transmembrane transport"/>
    <property type="evidence" value="ECO:0007669"/>
    <property type="project" value="TreeGrafter"/>
</dbReference>
<dbReference type="FunFam" id="1.10.3860.10:FF:000001">
    <property type="entry name" value="C4-dicarboxylate transport protein"/>
    <property type="match status" value="1"/>
</dbReference>
<dbReference type="Gene3D" id="1.10.3860.10">
    <property type="entry name" value="Sodium:dicarboxylate symporter"/>
    <property type="match status" value="1"/>
</dbReference>
<dbReference type="HAMAP" id="MF_01300">
    <property type="entry name" value="C4_dicarb_transport"/>
    <property type="match status" value="1"/>
</dbReference>
<dbReference type="InterPro" id="IPR023954">
    <property type="entry name" value="C4_dicarb_transport"/>
</dbReference>
<dbReference type="InterPro" id="IPR001991">
    <property type="entry name" value="Na-dicarboxylate_symporter"/>
</dbReference>
<dbReference type="InterPro" id="IPR018107">
    <property type="entry name" value="Na-dicarboxylate_symporter_CS"/>
</dbReference>
<dbReference type="InterPro" id="IPR036458">
    <property type="entry name" value="Na:dicarbo_symporter_sf"/>
</dbReference>
<dbReference type="NCBIfam" id="NF002461">
    <property type="entry name" value="PRK01663.1"/>
    <property type="match status" value="1"/>
</dbReference>
<dbReference type="NCBIfam" id="NF009587">
    <property type="entry name" value="PRK13027.1"/>
    <property type="match status" value="1"/>
</dbReference>
<dbReference type="PANTHER" id="PTHR42865:SF1">
    <property type="entry name" value="AEROBIC C4-DICARBOXYLATE TRANSPORT PROTEIN"/>
    <property type="match status" value="1"/>
</dbReference>
<dbReference type="PANTHER" id="PTHR42865">
    <property type="entry name" value="PROTON/GLUTAMATE-ASPARTATE SYMPORTER"/>
    <property type="match status" value="1"/>
</dbReference>
<dbReference type="Pfam" id="PF00375">
    <property type="entry name" value="SDF"/>
    <property type="match status" value="1"/>
</dbReference>
<dbReference type="PRINTS" id="PR00173">
    <property type="entry name" value="EDTRNSPORT"/>
</dbReference>
<dbReference type="SUPFAM" id="SSF118215">
    <property type="entry name" value="Proton glutamate symport protein"/>
    <property type="match status" value="1"/>
</dbReference>
<dbReference type="PROSITE" id="PS00713">
    <property type="entry name" value="NA_DICARBOXYL_SYMP_1"/>
    <property type="match status" value="1"/>
</dbReference>
<dbReference type="PROSITE" id="PS00714">
    <property type="entry name" value="NA_DICARBOXYL_SYMP_2"/>
    <property type="match status" value="1"/>
</dbReference>
<feature type="chain" id="PRO_0000322004" description="C4-dicarboxylate transport protein">
    <location>
        <begin position="1"/>
        <end position="428"/>
    </location>
</feature>
<feature type="transmembrane region" description="Helical" evidence="1">
    <location>
        <begin position="7"/>
        <end position="27"/>
    </location>
</feature>
<feature type="transmembrane region" description="Helical" evidence="1">
    <location>
        <begin position="40"/>
        <end position="60"/>
    </location>
</feature>
<feature type="transmembrane region" description="Helical" evidence="1">
    <location>
        <begin position="75"/>
        <end position="95"/>
    </location>
</feature>
<feature type="transmembrane region" description="Helical" evidence="1">
    <location>
        <begin position="143"/>
        <end position="163"/>
    </location>
</feature>
<feature type="transmembrane region" description="Helical" evidence="1">
    <location>
        <begin position="196"/>
        <end position="216"/>
    </location>
</feature>
<feature type="transmembrane region" description="Helical" evidence="1">
    <location>
        <begin position="221"/>
        <end position="241"/>
    </location>
</feature>
<feature type="transmembrane region" description="Helical" evidence="1">
    <location>
        <begin position="306"/>
        <end position="326"/>
    </location>
</feature>
<feature type="transmembrane region" description="Helical" evidence="1">
    <location>
        <begin position="329"/>
        <end position="349"/>
    </location>
</feature>
<feature type="transmembrane region" description="Helical" evidence="1">
    <location>
        <begin position="351"/>
        <end position="371"/>
    </location>
</feature>
<name>DCTA_SOLUE</name>
<gene>
    <name evidence="1" type="primary">dctA</name>
    <name type="ordered locus">Acid_3691</name>
</gene>
<comment type="function">
    <text evidence="1">Responsible for the transport of dicarboxylates such as succinate, fumarate, and malate from the periplasm across the membrane.</text>
</comment>
<comment type="subcellular location">
    <subcellularLocation>
        <location evidence="1">Cell inner membrane</location>
        <topology evidence="1">Multi-pass membrane protein</topology>
    </subcellularLocation>
</comment>
<comment type="similarity">
    <text evidence="1">Belongs to the dicarboxylate/amino acid:cation symporter (DAACS) (TC 2.A.23) family.</text>
</comment>